<accession>Q3IRB3</accession>
<protein>
    <recommendedName>
        <fullName evidence="1">Probable thymidylate kinase</fullName>
        <ecNumber evidence="1">2.7.4.9</ecNumber>
    </recommendedName>
    <alternativeName>
        <fullName evidence="1">dTMP kinase</fullName>
    </alternativeName>
</protein>
<evidence type="ECO:0000255" key="1">
    <source>
        <dbReference type="HAMAP-Rule" id="MF_00165"/>
    </source>
</evidence>
<proteinExistence type="inferred from homology"/>
<gene>
    <name evidence="1" type="primary">tmk</name>
    <name type="ordered locus">NP_2478A</name>
</gene>
<organism>
    <name type="scientific">Natronomonas pharaonis (strain ATCC 35678 / DSM 2160 / CIP 103997 / JCM 8858 / NBRC 14720 / NCIMB 2260 / Gabara)</name>
    <name type="common">Halobacterium pharaonis</name>
    <dbReference type="NCBI Taxonomy" id="348780"/>
    <lineage>
        <taxon>Archaea</taxon>
        <taxon>Methanobacteriati</taxon>
        <taxon>Methanobacteriota</taxon>
        <taxon>Stenosarchaea group</taxon>
        <taxon>Halobacteria</taxon>
        <taxon>Halobacteriales</taxon>
        <taxon>Haloarculaceae</taxon>
        <taxon>Natronomonas</taxon>
    </lineage>
</organism>
<comment type="catalytic activity">
    <reaction evidence="1">
        <text>dTMP + ATP = dTDP + ADP</text>
        <dbReference type="Rhea" id="RHEA:13517"/>
        <dbReference type="ChEBI" id="CHEBI:30616"/>
        <dbReference type="ChEBI" id="CHEBI:58369"/>
        <dbReference type="ChEBI" id="CHEBI:63528"/>
        <dbReference type="ChEBI" id="CHEBI:456216"/>
        <dbReference type="EC" id="2.7.4.9"/>
    </reaction>
</comment>
<comment type="similarity">
    <text evidence="1">Belongs to the thymidylate kinase family.</text>
</comment>
<feature type="chain" id="PRO_1000023231" description="Probable thymidylate kinase">
    <location>
        <begin position="1"/>
        <end position="196"/>
    </location>
</feature>
<feature type="binding site" evidence="1">
    <location>
        <begin position="7"/>
        <end position="14"/>
    </location>
    <ligand>
        <name>ATP</name>
        <dbReference type="ChEBI" id="CHEBI:30616"/>
    </ligand>
</feature>
<sequence>MLITLEGIDGSGKSTAHAALRERLTAEETTFTREPTDSWYGSAVERSIGDADADPLAELFLYTADHADHLSRVVRPALEAGEPVVSDRYSDSRYAYQGATLEGVIDEPMAYVKRVHEPFTRPPDATLYFDVPPTVGAERAGATNKFEAADYLESVRENYERLIEAEPERFHRIDATQSESAVVEAAVETVETLLSR</sequence>
<reference key="1">
    <citation type="journal article" date="2005" name="Genome Res.">
        <title>Living with two extremes: conclusions from the genome sequence of Natronomonas pharaonis.</title>
        <authorList>
            <person name="Falb M."/>
            <person name="Pfeiffer F."/>
            <person name="Palm P."/>
            <person name="Rodewald K."/>
            <person name="Hickmann V."/>
            <person name="Tittor J."/>
            <person name="Oesterhelt D."/>
        </authorList>
    </citation>
    <scope>NUCLEOTIDE SEQUENCE [LARGE SCALE GENOMIC DNA]</scope>
    <source>
        <strain>ATCC 35678 / DSM 2160 / CIP 103997 / JCM 8858 / NBRC 14720 / NCIMB 2260 / Gabara</strain>
    </source>
</reference>
<dbReference type="EC" id="2.7.4.9" evidence="1"/>
<dbReference type="EMBL" id="CR936257">
    <property type="protein sequence ID" value="CAI49330.1"/>
    <property type="molecule type" value="Genomic_DNA"/>
</dbReference>
<dbReference type="RefSeq" id="WP_011322956.1">
    <property type="nucleotide sequence ID" value="NC_007426.1"/>
</dbReference>
<dbReference type="SMR" id="Q3IRB3"/>
<dbReference type="STRING" id="348780.NP_2478A"/>
<dbReference type="EnsemblBacteria" id="CAI49330">
    <property type="protein sequence ID" value="CAI49330"/>
    <property type="gene ID" value="NP_2478A"/>
</dbReference>
<dbReference type="GeneID" id="3703273"/>
<dbReference type="KEGG" id="nph:NP_2478A"/>
<dbReference type="eggNOG" id="arCOG01891">
    <property type="taxonomic scope" value="Archaea"/>
</dbReference>
<dbReference type="HOGENOM" id="CLU_049131_0_2_2"/>
<dbReference type="OrthoDB" id="43083at2157"/>
<dbReference type="Proteomes" id="UP000002698">
    <property type="component" value="Chromosome"/>
</dbReference>
<dbReference type="GO" id="GO:0005737">
    <property type="term" value="C:cytoplasm"/>
    <property type="evidence" value="ECO:0007669"/>
    <property type="project" value="TreeGrafter"/>
</dbReference>
<dbReference type="GO" id="GO:0005524">
    <property type="term" value="F:ATP binding"/>
    <property type="evidence" value="ECO:0007669"/>
    <property type="project" value="UniProtKB-UniRule"/>
</dbReference>
<dbReference type="GO" id="GO:0004798">
    <property type="term" value="F:dTMP kinase activity"/>
    <property type="evidence" value="ECO:0007669"/>
    <property type="project" value="UniProtKB-UniRule"/>
</dbReference>
<dbReference type="GO" id="GO:0006233">
    <property type="term" value="P:dTDP biosynthetic process"/>
    <property type="evidence" value="ECO:0007669"/>
    <property type="project" value="InterPro"/>
</dbReference>
<dbReference type="GO" id="GO:0006235">
    <property type="term" value="P:dTTP biosynthetic process"/>
    <property type="evidence" value="ECO:0007669"/>
    <property type="project" value="UniProtKB-UniRule"/>
</dbReference>
<dbReference type="GO" id="GO:0006227">
    <property type="term" value="P:dUDP biosynthetic process"/>
    <property type="evidence" value="ECO:0007669"/>
    <property type="project" value="TreeGrafter"/>
</dbReference>
<dbReference type="CDD" id="cd01672">
    <property type="entry name" value="TMPK"/>
    <property type="match status" value="1"/>
</dbReference>
<dbReference type="Gene3D" id="3.40.50.300">
    <property type="entry name" value="P-loop containing nucleotide triphosphate hydrolases"/>
    <property type="match status" value="1"/>
</dbReference>
<dbReference type="HAMAP" id="MF_00165">
    <property type="entry name" value="Thymidylate_kinase"/>
    <property type="match status" value="1"/>
</dbReference>
<dbReference type="InterPro" id="IPR027417">
    <property type="entry name" value="P-loop_NTPase"/>
</dbReference>
<dbReference type="InterPro" id="IPR039430">
    <property type="entry name" value="Thymidylate_kin-like_dom"/>
</dbReference>
<dbReference type="InterPro" id="IPR018094">
    <property type="entry name" value="Thymidylate_kinase"/>
</dbReference>
<dbReference type="NCBIfam" id="TIGR00041">
    <property type="entry name" value="DTMP_kinase"/>
    <property type="match status" value="1"/>
</dbReference>
<dbReference type="PANTHER" id="PTHR10344">
    <property type="entry name" value="THYMIDYLATE KINASE"/>
    <property type="match status" value="1"/>
</dbReference>
<dbReference type="PANTHER" id="PTHR10344:SF4">
    <property type="entry name" value="UMP-CMP KINASE 2, MITOCHONDRIAL"/>
    <property type="match status" value="1"/>
</dbReference>
<dbReference type="Pfam" id="PF02223">
    <property type="entry name" value="Thymidylate_kin"/>
    <property type="match status" value="1"/>
</dbReference>
<dbReference type="SUPFAM" id="SSF52540">
    <property type="entry name" value="P-loop containing nucleoside triphosphate hydrolases"/>
    <property type="match status" value="1"/>
</dbReference>
<name>KTHY_NATPD</name>
<keyword id="KW-0067">ATP-binding</keyword>
<keyword id="KW-0418">Kinase</keyword>
<keyword id="KW-0545">Nucleotide biosynthesis</keyword>
<keyword id="KW-0547">Nucleotide-binding</keyword>
<keyword id="KW-1185">Reference proteome</keyword>
<keyword id="KW-0808">Transferase</keyword>